<keyword id="KW-0002">3D-structure</keyword>
<keyword id="KW-0025">Alternative splicing</keyword>
<keyword id="KW-1003">Cell membrane</keyword>
<keyword id="KW-0202">Cytokine</keyword>
<keyword id="KW-0903">Direct protein sequencing</keyword>
<keyword id="KW-1015">Disulfide bond</keyword>
<keyword id="KW-0325">Glycoprotein</keyword>
<keyword id="KW-0339">Growth factor</keyword>
<keyword id="KW-0391">Immunity</keyword>
<keyword id="KW-0395">Inflammatory response</keyword>
<keyword id="KW-0399">Innate immunity</keyword>
<keyword id="KW-0472">Membrane</keyword>
<keyword id="KW-0597">Phosphoprotein</keyword>
<keyword id="KW-0654">Proteoglycan</keyword>
<keyword id="KW-1267">Proteomics identification</keyword>
<keyword id="KW-1185">Reference proteome</keyword>
<keyword id="KW-0964">Secreted</keyword>
<keyword id="KW-0732">Signal</keyword>
<keyword id="KW-0812">Transmembrane</keyword>
<keyword id="KW-1133">Transmembrane helix</keyword>
<evidence type="ECO:0000250" key="1">
    <source>
        <dbReference type="UniProtKB" id="Q8JZQ0"/>
    </source>
</evidence>
<evidence type="ECO:0000255" key="2"/>
<evidence type="ECO:0000256" key="3">
    <source>
        <dbReference type="SAM" id="MobiDB-lite"/>
    </source>
</evidence>
<evidence type="ECO:0000269" key="4">
    <source>
    </source>
</evidence>
<evidence type="ECO:0000269" key="5">
    <source>
    </source>
</evidence>
<evidence type="ECO:0000269" key="6">
    <source>
    </source>
</evidence>
<evidence type="ECO:0000269" key="7">
    <source>
    </source>
</evidence>
<evidence type="ECO:0000269" key="8">
    <source>
    </source>
</evidence>
<evidence type="ECO:0000269" key="9">
    <source>
    </source>
</evidence>
<evidence type="ECO:0000269" key="10">
    <source>
    </source>
</evidence>
<evidence type="ECO:0000269" key="11">
    <source>
    </source>
</evidence>
<evidence type="ECO:0000269" key="12">
    <source>
    </source>
</evidence>
<evidence type="ECO:0000269" key="13">
    <source>
    </source>
</evidence>
<evidence type="ECO:0000269" key="14">
    <source>
    </source>
</evidence>
<evidence type="ECO:0000269" key="15">
    <source>
    </source>
</evidence>
<evidence type="ECO:0000269" key="16">
    <source>
    </source>
</evidence>
<evidence type="ECO:0000269" key="17">
    <source>
    </source>
</evidence>
<evidence type="ECO:0000269" key="18">
    <source>
    </source>
</evidence>
<evidence type="ECO:0000269" key="19">
    <source>
    </source>
</evidence>
<evidence type="ECO:0000269" key="20">
    <source>
    </source>
</evidence>
<evidence type="ECO:0000269" key="21">
    <source>
    </source>
</evidence>
<evidence type="ECO:0000269" key="22">
    <source>
    </source>
</evidence>
<evidence type="ECO:0000269" key="23">
    <source>
    </source>
</evidence>
<evidence type="ECO:0000269" key="24">
    <source ref="7"/>
</evidence>
<evidence type="ECO:0000303" key="25">
    <source>
    </source>
</evidence>
<evidence type="ECO:0000303" key="26">
    <source>
    </source>
</evidence>
<evidence type="ECO:0000305" key="27"/>
<evidence type="ECO:0007829" key="28">
    <source>
        <dbReference type="PDB" id="5LXF"/>
    </source>
</evidence>
<name>CSF1_HUMAN</name>
<dbReference type="EMBL" id="M11296">
    <property type="protein sequence ID" value="AAB59527.1"/>
    <property type="molecule type" value="Genomic_DNA"/>
</dbReference>
<dbReference type="EMBL" id="M11038">
    <property type="protein sequence ID" value="AAB59527.1"/>
    <property type="status" value="JOINED"/>
    <property type="molecule type" value="Genomic_DNA"/>
</dbReference>
<dbReference type="EMBL" id="M11295">
    <property type="protein sequence ID" value="AAB59527.1"/>
    <property type="status" value="JOINED"/>
    <property type="molecule type" value="Genomic_DNA"/>
</dbReference>
<dbReference type="EMBL" id="M37435">
    <property type="protein sequence ID" value="AAA52117.1"/>
    <property type="molecule type" value="mRNA"/>
</dbReference>
<dbReference type="EMBL" id="M64592">
    <property type="protein sequence ID" value="AAA59572.1"/>
    <property type="molecule type" value="mRNA"/>
</dbReference>
<dbReference type="EMBL" id="U22386">
    <property type="protein sequence ID" value="AAA64849.1"/>
    <property type="molecule type" value="mRNA"/>
</dbReference>
<dbReference type="EMBL" id="M27087">
    <property type="protein sequence ID" value="AAA59573.1"/>
    <property type="molecule type" value="mRNA"/>
</dbReference>
<dbReference type="EMBL" id="AK291660">
    <property type="protein sequence ID" value="BAF84349.1"/>
    <property type="molecule type" value="mRNA"/>
</dbReference>
<dbReference type="EMBL" id="AL450468">
    <property type="status" value="NOT_ANNOTATED_CDS"/>
    <property type="molecule type" value="Genomic_DNA"/>
</dbReference>
<dbReference type="EMBL" id="CH471122">
    <property type="protein sequence ID" value="EAW56416.1"/>
    <property type="molecule type" value="Genomic_DNA"/>
</dbReference>
<dbReference type="EMBL" id="BC021117">
    <property type="protein sequence ID" value="AAH21117.1"/>
    <property type="molecule type" value="mRNA"/>
</dbReference>
<dbReference type="EMBL" id="X05825">
    <property type="protein sequence ID" value="CAA29265.1"/>
    <property type="molecule type" value="mRNA"/>
</dbReference>
<dbReference type="EMBL" id="X06106">
    <property type="protein sequence ID" value="CAA29479.1"/>
    <property type="molecule type" value="Genomic_DNA"/>
</dbReference>
<dbReference type="EMBL" id="M76453">
    <property type="protein sequence ID" value="AAA52120.2"/>
    <property type="molecule type" value="mRNA"/>
</dbReference>
<dbReference type="CCDS" id="CCDS30797.1">
    <molecule id="P09603-3"/>
</dbReference>
<dbReference type="CCDS" id="CCDS816.1">
    <molecule id="P09603-1"/>
</dbReference>
<dbReference type="CCDS" id="CCDS817.1">
    <molecule id="P09603-2"/>
</dbReference>
<dbReference type="PIR" id="A47583">
    <property type="entry name" value="FQHUMP"/>
</dbReference>
<dbReference type="RefSeq" id="NP_000748.3">
    <molecule id="P09603-1"/>
    <property type="nucleotide sequence ID" value="NM_000757.5"/>
</dbReference>
<dbReference type="RefSeq" id="NP_757349.2">
    <molecule id="P09603-2"/>
    <property type="nucleotide sequence ID" value="NM_172210.3"/>
</dbReference>
<dbReference type="RefSeq" id="NP_757350.2">
    <molecule id="P09603-3"/>
    <property type="nucleotide sequence ID" value="NM_172211.4"/>
</dbReference>
<dbReference type="RefSeq" id="NP_757351.2">
    <molecule id="P09603-1"/>
    <property type="nucleotide sequence ID" value="NM_172212.3"/>
</dbReference>
<dbReference type="RefSeq" id="XP_047302708.1">
    <molecule id="P09603-3"/>
    <property type="nucleotide sequence ID" value="XM_047446752.1"/>
</dbReference>
<dbReference type="PDB" id="1HMC">
    <property type="method" value="X-ray"/>
    <property type="resolution" value="2.50 A"/>
    <property type="chains" value="A/B=36-181"/>
</dbReference>
<dbReference type="PDB" id="3UEZ">
    <property type="method" value="X-ray"/>
    <property type="resolution" value="3.41 A"/>
    <property type="chains" value="E/F/G/H=33-181"/>
</dbReference>
<dbReference type="PDB" id="3UF2">
    <property type="method" value="X-ray"/>
    <property type="resolution" value="2.75 A"/>
    <property type="chains" value="A/B/C/D/E/F/G/H/I/J=33-181"/>
</dbReference>
<dbReference type="PDB" id="4ADF">
    <property type="method" value="X-ray"/>
    <property type="resolution" value="4.40 A"/>
    <property type="chains" value="G/H/I/J/K/L/S/T/U/V/W/X=33-181"/>
</dbReference>
<dbReference type="PDB" id="4FA8">
    <property type="method" value="X-ray"/>
    <property type="resolution" value="2.20 A"/>
    <property type="chains" value="E/F/G=36-180"/>
</dbReference>
<dbReference type="PDB" id="4WRL">
    <property type="method" value="X-ray"/>
    <property type="resolution" value="2.80 A"/>
    <property type="chains" value="B/D=33-181"/>
</dbReference>
<dbReference type="PDB" id="4WRM">
    <property type="method" value="X-ray"/>
    <property type="resolution" value="6.85 A"/>
    <property type="chains" value="B=33-181"/>
</dbReference>
<dbReference type="PDB" id="5LXF">
    <property type="method" value="X-ray"/>
    <property type="resolution" value="2.00 A"/>
    <property type="chains" value="A/B=33-181"/>
</dbReference>
<dbReference type="PDBsum" id="1HMC"/>
<dbReference type="PDBsum" id="3UEZ"/>
<dbReference type="PDBsum" id="3UF2"/>
<dbReference type="PDBsum" id="4ADF"/>
<dbReference type="PDBsum" id="4FA8"/>
<dbReference type="PDBsum" id="4WRL"/>
<dbReference type="PDBsum" id="4WRM"/>
<dbReference type="PDBsum" id="5LXF"/>
<dbReference type="SMR" id="P09603"/>
<dbReference type="BioGRID" id="107822">
    <property type="interactions" value="23"/>
</dbReference>
<dbReference type="ComplexPortal" id="CPX-25717">
    <property type="entry name" value="Macrophage colony-stimulating factor-1 receptor-ligand complex"/>
</dbReference>
<dbReference type="DIP" id="DIP-41860N"/>
<dbReference type="FunCoup" id="P09603">
    <property type="interactions" value="1316"/>
</dbReference>
<dbReference type="IntAct" id="P09603">
    <property type="interactions" value="17"/>
</dbReference>
<dbReference type="STRING" id="9606.ENSP00000327513"/>
<dbReference type="ChEMBL" id="CHEMBL3989382"/>
<dbReference type="GlyConnect" id="2925">
    <property type="glycosylation" value="1 O-Linked glycan (1 site)"/>
</dbReference>
<dbReference type="GlyCosmos" id="P09603">
    <property type="glycosylation" value="19 sites, 3 glycans"/>
</dbReference>
<dbReference type="GlyGen" id="P09603">
    <property type="glycosylation" value="38 sites, 3 N-linked glycans (1 site), 4 O-linked glycans (34 sites)"/>
</dbReference>
<dbReference type="iPTMnet" id="P09603"/>
<dbReference type="PhosphoSitePlus" id="P09603"/>
<dbReference type="BioMuta" id="CSF1"/>
<dbReference type="DMDM" id="311033367"/>
<dbReference type="jPOST" id="P09603"/>
<dbReference type="MassIVE" id="P09603"/>
<dbReference type="PaxDb" id="9606-ENSP00000327513"/>
<dbReference type="PeptideAtlas" id="P09603"/>
<dbReference type="ProteomicsDB" id="52250">
    <molecule id="P09603-1"/>
</dbReference>
<dbReference type="ProteomicsDB" id="52251">
    <molecule id="P09603-2"/>
</dbReference>
<dbReference type="ProteomicsDB" id="52252">
    <molecule id="P09603-3"/>
</dbReference>
<dbReference type="ABCD" id="P09603">
    <property type="antibodies" value="32 sequenced antibodies"/>
</dbReference>
<dbReference type="Antibodypedia" id="20082">
    <property type="antibodies" value="954 antibodies from 46 providers"/>
</dbReference>
<dbReference type="CPTC" id="P09603">
    <property type="antibodies" value="1 antibody"/>
</dbReference>
<dbReference type="DNASU" id="1435"/>
<dbReference type="Ensembl" id="ENST00000329608.11">
    <molecule id="P09603-1"/>
    <property type="protein sequence ID" value="ENSP00000327513.6"/>
    <property type="gene ID" value="ENSG00000184371.14"/>
</dbReference>
<dbReference type="Ensembl" id="ENST00000369801.1">
    <molecule id="P09603-2"/>
    <property type="protein sequence ID" value="ENSP00000358816.1"/>
    <property type="gene ID" value="ENSG00000184371.14"/>
</dbReference>
<dbReference type="Ensembl" id="ENST00000369802.7">
    <molecule id="P09603-1"/>
    <property type="protein sequence ID" value="ENSP00000358817.3"/>
    <property type="gene ID" value="ENSG00000184371.14"/>
</dbReference>
<dbReference type="Ensembl" id="ENST00000420111.6">
    <molecule id="P09603-3"/>
    <property type="protein sequence ID" value="ENSP00000407317.2"/>
    <property type="gene ID" value="ENSG00000184371.14"/>
</dbReference>
<dbReference type="GeneID" id="1435"/>
<dbReference type="KEGG" id="hsa:1435"/>
<dbReference type="MANE-Select" id="ENST00000329608.11">
    <property type="protein sequence ID" value="ENSP00000327513.6"/>
    <property type="RefSeq nucleotide sequence ID" value="NM_000757.6"/>
    <property type="RefSeq protein sequence ID" value="NP_000748.4"/>
</dbReference>
<dbReference type="UCSC" id="uc001dyt.3">
    <molecule id="P09603-1"/>
    <property type="organism name" value="human"/>
</dbReference>
<dbReference type="AGR" id="HGNC:2432"/>
<dbReference type="CTD" id="1435"/>
<dbReference type="DisGeNET" id="1435"/>
<dbReference type="GeneCards" id="CSF1"/>
<dbReference type="HGNC" id="HGNC:2432">
    <property type="gene designation" value="CSF1"/>
</dbReference>
<dbReference type="HPA" id="ENSG00000184371">
    <property type="expression patterns" value="Low tissue specificity"/>
</dbReference>
<dbReference type="MalaCards" id="CSF1"/>
<dbReference type="MIM" id="120420">
    <property type="type" value="gene"/>
</dbReference>
<dbReference type="neXtProt" id="NX_P09603"/>
<dbReference type="OpenTargets" id="ENSG00000184371"/>
<dbReference type="PharmGKB" id="PA26935"/>
<dbReference type="VEuPathDB" id="HostDB:ENSG00000184371"/>
<dbReference type="eggNOG" id="ENOG502S271">
    <property type="taxonomic scope" value="Eukaryota"/>
</dbReference>
<dbReference type="GeneTree" id="ENSGT00390000015805"/>
<dbReference type="HOGENOM" id="CLU_095000_0_0_1"/>
<dbReference type="InParanoid" id="P09603"/>
<dbReference type="OMA" id="CQIAYEF"/>
<dbReference type="OrthoDB" id="8702024at2759"/>
<dbReference type="PAN-GO" id="P09603">
    <property type="GO annotations" value="4 GO annotations based on evolutionary models"/>
</dbReference>
<dbReference type="PhylomeDB" id="P09603"/>
<dbReference type="TreeFam" id="TF337718"/>
<dbReference type="PathwayCommons" id="P09603"/>
<dbReference type="Reactome" id="R-HSA-381426">
    <property type="pathway name" value="Regulation of Insulin-like Growth Factor (IGF) transport and uptake by Insulin-like Growth Factor Binding Proteins (IGFBPs)"/>
</dbReference>
<dbReference type="Reactome" id="R-HSA-449836">
    <property type="pathway name" value="Other interleukin signaling"/>
</dbReference>
<dbReference type="Reactome" id="R-HSA-6783783">
    <property type="pathway name" value="Interleukin-10 signaling"/>
</dbReference>
<dbReference type="Reactome" id="R-HSA-8957275">
    <property type="pathway name" value="Post-translational protein phosphorylation"/>
</dbReference>
<dbReference type="Reactome" id="R-HSA-9680350">
    <property type="pathway name" value="Signaling by CSF1 (M-CSF) in myeloid cells"/>
</dbReference>
<dbReference type="Reactome" id="R-HSA-9856649">
    <property type="pathway name" value="Transcriptional and post-translational regulation of MITF-M expression and activity"/>
</dbReference>
<dbReference type="SignaLink" id="P09603"/>
<dbReference type="SIGNOR" id="P09603"/>
<dbReference type="BioGRID-ORCS" id="1435">
    <property type="hits" value="10 hits in 1159 CRISPR screens"/>
</dbReference>
<dbReference type="ChiTaRS" id="CSF1">
    <property type="organism name" value="human"/>
</dbReference>
<dbReference type="EvolutionaryTrace" id="P09603"/>
<dbReference type="GeneWiki" id="Macrophage_colony-stimulating_factor"/>
<dbReference type="GenomeRNAi" id="1435"/>
<dbReference type="Pharos" id="P09603">
    <property type="development level" value="Tbio"/>
</dbReference>
<dbReference type="PRO" id="PR:P09603"/>
<dbReference type="Proteomes" id="UP000005640">
    <property type="component" value="Chromosome 1"/>
</dbReference>
<dbReference type="RNAct" id="P09603">
    <property type="molecule type" value="protein"/>
</dbReference>
<dbReference type="Bgee" id="ENSG00000184371">
    <property type="expression patterns" value="Expressed in omental fat pad and 151 other cell types or tissues"/>
</dbReference>
<dbReference type="ExpressionAtlas" id="P09603">
    <property type="expression patterns" value="baseline and differential"/>
</dbReference>
<dbReference type="GO" id="GO:1990682">
    <property type="term" value="C:CSF1-CSF1R complex"/>
    <property type="evidence" value="ECO:0000250"/>
    <property type="project" value="BHF-UCL"/>
</dbReference>
<dbReference type="GO" id="GO:0005788">
    <property type="term" value="C:endoplasmic reticulum lumen"/>
    <property type="evidence" value="ECO:0000304"/>
    <property type="project" value="Reactome"/>
</dbReference>
<dbReference type="GO" id="GO:0005576">
    <property type="term" value="C:extracellular region"/>
    <property type="evidence" value="ECO:0000304"/>
    <property type="project" value="Reactome"/>
</dbReference>
<dbReference type="GO" id="GO:0005615">
    <property type="term" value="C:extracellular space"/>
    <property type="evidence" value="ECO:0000314"/>
    <property type="project" value="BHF-UCL"/>
</dbReference>
<dbReference type="GO" id="GO:0016020">
    <property type="term" value="C:membrane"/>
    <property type="evidence" value="ECO:0000303"/>
    <property type="project" value="UniProtKB"/>
</dbReference>
<dbReference type="GO" id="GO:0016604">
    <property type="term" value="C:nuclear body"/>
    <property type="evidence" value="ECO:0000314"/>
    <property type="project" value="HPA"/>
</dbReference>
<dbReference type="GO" id="GO:0048471">
    <property type="term" value="C:perinuclear region of cytoplasm"/>
    <property type="evidence" value="ECO:0000314"/>
    <property type="project" value="BHF-UCL"/>
</dbReference>
<dbReference type="GO" id="GO:0005886">
    <property type="term" value="C:plasma membrane"/>
    <property type="evidence" value="ECO:0000314"/>
    <property type="project" value="HPA"/>
</dbReference>
<dbReference type="GO" id="GO:0005125">
    <property type="term" value="F:cytokine activity"/>
    <property type="evidence" value="ECO:0000314"/>
    <property type="project" value="MGI"/>
</dbReference>
<dbReference type="GO" id="GO:0008083">
    <property type="term" value="F:growth factor activity"/>
    <property type="evidence" value="ECO:0000314"/>
    <property type="project" value="BHF-UCL"/>
</dbReference>
<dbReference type="GO" id="GO:0042802">
    <property type="term" value="F:identical protein binding"/>
    <property type="evidence" value="ECO:0000353"/>
    <property type="project" value="IntAct"/>
</dbReference>
<dbReference type="GO" id="GO:0005157">
    <property type="term" value="F:macrophage colony-stimulating factor receptor binding"/>
    <property type="evidence" value="ECO:0000250"/>
    <property type="project" value="BHF-UCL"/>
</dbReference>
<dbReference type="GO" id="GO:0042803">
    <property type="term" value="F:protein homodimerization activity"/>
    <property type="evidence" value="ECO:0000314"/>
    <property type="project" value="BHF-UCL"/>
</dbReference>
<dbReference type="GO" id="GO:0060444">
    <property type="term" value="P:branching involved in mammary gland duct morphogenesis"/>
    <property type="evidence" value="ECO:0007669"/>
    <property type="project" value="Ensembl"/>
</dbReference>
<dbReference type="GO" id="GO:0007169">
    <property type="term" value="P:cell surface receptor protein tyrosine kinase signaling pathway"/>
    <property type="evidence" value="ECO:0000314"/>
    <property type="project" value="BHF-UCL"/>
</dbReference>
<dbReference type="GO" id="GO:0003006">
    <property type="term" value="P:developmental process involved in reproduction"/>
    <property type="evidence" value="ECO:0000250"/>
    <property type="project" value="BHF-UCL"/>
</dbReference>
<dbReference type="GO" id="GO:0048873">
    <property type="term" value="P:homeostasis of number of cells within a tissue"/>
    <property type="evidence" value="ECO:0007669"/>
    <property type="project" value="Ensembl"/>
</dbReference>
<dbReference type="GO" id="GO:0006954">
    <property type="term" value="P:inflammatory response"/>
    <property type="evidence" value="ECO:0007669"/>
    <property type="project" value="UniProtKB-KW"/>
</dbReference>
<dbReference type="GO" id="GO:0045087">
    <property type="term" value="P:innate immune response"/>
    <property type="evidence" value="ECO:0007669"/>
    <property type="project" value="UniProtKB-KW"/>
</dbReference>
<dbReference type="GO" id="GO:0038145">
    <property type="term" value="P:macrophage colony-stimulating factor signaling pathway"/>
    <property type="evidence" value="ECO:0007669"/>
    <property type="project" value="Ensembl"/>
</dbReference>
<dbReference type="GO" id="GO:0030225">
    <property type="term" value="P:macrophage differentiation"/>
    <property type="evidence" value="ECO:0000304"/>
    <property type="project" value="UniProtKB"/>
</dbReference>
<dbReference type="GO" id="GO:0061519">
    <property type="term" value="P:macrophage homeostasis"/>
    <property type="evidence" value="ECO:0007669"/>
    <property type="project" value="Ensembl"/>
</dbReference>
<dbReference type="GO" id="GO:0060763">
    <property type="term" value="P:mammary duct terminal end bud growth"/>
    <property type="evidence" value="ECO:0007669"/>
    <property type="project" value="Ensembl"/>
</dbReference>
<dbReference type="GO" id="GO:0060611">
    <property type="term" value="P:mammary gland fat development"/>
    <property type="evidence" value="ECO:0007669"/>
    <property type="project" value="Ensembl"/>
</dbReference>
<dbReference type="GO" id="GO:0061518">
    <property type="term" value="P:microglial cell proliferation"/>
    <property type="evidence" value="ECO:0007669"/>
    <property type="project" value="Ensembl"/>
</dbReference>
<dbReference type="GO" id="GO:0042117">
    <property type="term" value="P:monocyte activation"/>
    <property type="evidence" value="ECO:0000303"/>
    <property type="project" value="BHF-UCL"/>
</dbReference>
<dbReference type="GO" id="GO:0030224">
    <property type="term" value="P:monocyte differentiation"/>
    <property type="evidence" value="ECO:0007669"/>
    <property type="project" value="Ensembl"/>
</dbReference>
<dbReference type="GO" id="GO:0035702">
    <property type="term" value="P:monocyte homeostasis"/>
    <property type="evidence" value="ECO:0007669"/>
    <property type="project" value="Ensembl"/>
</dbReference>
<dbReference type="GO" id="GO:0097529">
    <property type="term" value="P:myeloid leukocyte migration"/>
    <property type="evidence" value="ECO:0007669"/>
    <property type="project" value="Ensembl"/>
</dbReference>
<dbReference type="GO" id="GO:0001780">
    <property type="term" value="P:neutrophil homeostasis"/>
    <property type="evidence" value="ECO:0007669"/>
    <property type="project" value="Ensembl"/>
</dbReference>
<dbReference type="GO" id="GO:0030316">
    <property type="term" value="P:osteoclast differentiation"/>
    <property type="evidence" value="ECO:0000314"/>
    <property type="project" value="BHF-UCL"/>
</dbReference>
<dbReference type="GO" id="GO:0002158">
    <property type="term" value="P:osteoclast proliferation"/>
    <property type="evidence" value="ECO:0007669"/>
    <property type="project" value="Ensembl"/>
</dbReference>
<dbReference type="GO" id="GO:0030335">
    <property type="term" value="P:positive regulation of cell migration"/>
    <property type="evidence" value="ECO:0000250"/>
    <property type="project" value="BHF-UCL"/>
</dbReference>
<dbReference type="GO" id="GO:0008284">
    <property type="term" value="P:positive regulation of cell population proliferation"/>
    <property type="evidence" value="ECO:0000314"/>
    <property type="project" value="MGI"/>
</dbReference>
<dbReference type="GO" id="GO:0001954">
    <property type="term" value="P:positive regulation of cell-matrix adhesion"/>
    <property type="evidence" value="ECO:0000250"/>
    <property type="project" value="BHF-UCL"/>
</dbReference>
<dbReference type="GO" id="GO:0010628">
    <property type="term" value="P:positive regulation of gene expression"/>
    <property type="evidence" value="ECO:0000314"/>
    <property type="project" value="BHF-UCL"/>
</dbReference>
<dbReference type="GO" id="GO:0010759">
    <property type="term" value="P:positive regulation of macrophage chemotaxis"/>
    <property type="evidence" value="ECO:0000314"/>
    <property type="project" value="BHF-UCL"/>
</dbReference>
<dbReference type="GO" id="GO:1902228">
    <property type="term" value="P:positive regulation of macrophage colony-stimulating factor signaling pathway"/>
    <property type="evidence" value="ECO:0000314"/>
    <property type="project" value="BHF-UCL"/>
</dbReference>
<dbReference type="GO" id="GO:0010744">
    <property type="term" value="P:positive regulation of macrophage derived foam cell differentiation"/>
    <property type="evidence" value="ECO:0000314"/>
    <property type="project" value="BHF-UCL"/>
</dbReference>
<dbReference type="GO" id="GO:0045651">
    <property type="term" value="P:positive regulation of macrophage differentiation"/>
    <property type="evidence" value="ECO:0000314"/>
    <property type="project" value="BHF-UCL"/>
</dbReference>
<dbReference type="GO" id="GO:1905523">
    <property type="term" value="P:positive regulation of macrophage migration"/>
    <property type="evidence" value="ECO:0000315"/>
    <property type="project" value="BHF-UCL"/>
</dbReference>
<dbReference type="GO" id="GO:1904141">
    <property type="term" value="P:positive regulation of microglial cell migration"/>
    <property type="evidence" value="ECO:0000314"/>
    <property type="project" value="BHF-UCL"/>
</dbReference>
<dbReference type="GO" id="GO:0045657">
    <property type="term" value="P:positive regulation of monocyte differentiation"/>
    <property type="evidence" value="ECO:0000250"/>
    <property type="project" value="BHF-UCL"/>
</dbReference>
<dbReference type="GO" id="GO:0032946">
    <property type="term" value="P:positive regulation of mononuclear cell proliferation"/>
    <property type="evidence" value="ECO:0000314"/>
    <property type="project" value="BHF-UCL"/>
</dbReference>
<dbReference type="GO" id="GO:0040018">
    <property type="term" value="P:positive regulation of multicellular organism growth"/>
    <property type="evidence" value="ECO:0007669"/>
    <property type="project" value="Ensembl"/>
</dbReference>
<dbReference type="GO" id="GO:0042488">
    <property type="term" value="P:positive regulation of odontogenesis of dentin-containing tooth"/>
    <property type="evidence" value="ECO:0007669"/>
    <property type="project" value="Ensembl"/>
</dbReference>
<dbReference type="GO" id="GO:0045672">
    <property type="term" value="P:positive regulation of osteoclast differentiation"/>
    <property type="evidence" value="ECO:0000314"/>
    <property type="project" value="BHF-UCL"/>
</dbReference>
<dbReference type="GO" id="GO:0051247">
    <property type="term" value="P:positive regulation of protein metabolic process"/>
    <property type="evidence" value="ECO:0000314"/>
    <property type="project" value="BHF-UCL"/>
</dbReference>
<dbReference type="GO" id="GO:0046579">
    <property type="term" value="P:positive regulation of Ras protein signal transduction"/>
    <property type="evidence" value="ECO:0007669"/>
    <property type="project" value="Ensembl"/>
</dbReference>
<dbReference type="GO" id="GO:0007265">
    <property type="term" value="P:Ras protein signal transduction"/>
    <property type="evidence" value="ECO:0007669"/>
    <property type="project" value="Ensembl"/>
</dbReference>
<dbReference type="GO" id="GO:0010743">
    <property type="term" value="P:regulation of macrophage derived foam cell differentiation"/>
    <property type="evidence" value="ECO:0000303"/>
    <property type="project" value="BHF-UCL"/>
</dbReference>
<dbReference type="GO" id="GO:0030278">
    <property type="term" value="P:regulation of ossification"/>
    <property type="evidence" value="ECO:0007669"/>
    <property type="project" value="Ensembl"/>
</dbReference>
<dbReference type="GO" id="GO:0002931">
    <property type="term" value="P:response to ischemia"/>
    <property type="evidence" value="ECO:0000314"/>
    <property type="project" value="ARUK-UCL"/>
</dbReference>
<dbReference type="FunFam" id="1.20.1250.10:FF:000010">
    <property type="entry name" value="Macrophage colony-stimulating factor 1"/>
    <property type="match status" value="1"/>
</dbReference>
<dbReference type="Gene3D" id="1.20.1250.10">
    <property type="match status" value="1"/>
</dbReference>
<dbReference type="InterPro" id="IPR009079">
    <property type="entry name" value="4_helix_cytokine-like_core"/>
</dbReference>
<dbReference type="InterPro" id="IPR008001">
    <property type="entry name" value="MCSF-1"/>
</dbReference>
<dbReference type="PANTHER" id="PTHR10058">
    <property type="entry name" value="MACROPHAGE COLONY STIMULATING FACTOR"/>
    <property type="match status" value="1"/>
</dbReference>
<dbReference type="PANTHER" id="PTHR10058:SF0">
    <property type="entry name" value="MACROPHAGE COLONY-STIMULATING FACTOR 1"/>
    <property type="match status" value="1"/>
</dbReference>
<dbReference type="Pfam" id="PF05337">
    <property type="entry name" value="CSF-1"/>
    <property type="match status" value="1"/>
</dbReference>
<dbReference type="PIRSF" id="PIRSF001948">
    <property type="entry name" value="MCSF-1"/>
    <property type="match status" value="1"/>
</dbReference>
<dbReference type="SUPFAM" id="SSF47266">
    <property type="entry name" value="4-helical cytokines"/>
    <property type="match status" value="1"/>
</dbReference>
<protein>
    <recommendedName>
        <fullName>Macrophage colony-stimulating factor 1</fullName>
        <shortName>CSF-1</shortName>
        <shortName>M-CSF</shortName>
        <shortName>MCSF</shortName>
    </recommendedName>
    <alternativeName>
        <fullName>Lanimostim</fullName>
    </alternativeName>
    <alternativeName>
        <fullName evidence="26">Proteoglycan macrophage colony-stimulating factor</fullName>
        <shortName evidence="26">PG-M-CSF</shortName>
    </alternativeName>
    <component>
        <recommendedName>
            <fullName>Processed macrophage colony-stimulating factor 1</fullName>
        </recommendedName>
    </component>
    <component>
        <recommendedName>
            <fullName evidence="26">Macrophage colony-stimulating factor 1 43 kDa subunit</fullName>
        </recommendedName>
    </component>
</protein>
<organism>
    <name type="scientific">Homo sapiens</name>
    <name type="common">Human</name>
    <dbReference type="NCBI Taxonomy" id="9606"/>
    <lineage>
        <taxon>Eukaryota</taxon>
        <taxon>Metazoa</taxon>
        <taxon>Chordata</taxon>
        <taxon>Craniata</taxon>
        <taxon>Vertebrata</taxon>
        <taxon>Euteleostomi</taxon>
        <taxon>Mammalia</taxon>
        <taxon>Eutheria</taxon>
        <taxon>Euarchontoglires</taxon>
        <taxon>Primates</taxon>
        <taxon>Haplorrhini</taxon>
        <taxon>Catarrhini</taxon>
        <taxon>Hominidae</taxon>
        <taxon>Homo</taxon>
    </lineage>
</organism>
<proteinExistence type="evidence at protein level"/>
<accession>P09603</accession>
<accession>A8K6J5</accession>
<accession>Q13130</accession>
<accession>Q14086</accession>
<accession>Q14806</accession>
<accession>Q5VVF3</accession>
<accession>Q5VVF4</accession>
<accession>Q9UQR8</accession>
<gene>
    <name type="primary">CSF1</name>
</gene>
<sequence>MTAPGAAGRCPPTTWLGSLLLLVCLLASRSITEEVSEYCSHMIGSGHLQSLQRLIDSQMETSCQITFEFVDQEQLKDPVCYLKKAFLLVQDIMEDTMRFRDNTPNAIAIVQLQELSLRLKSCFTKDYEEHDKACVRTFYETPLQLLEKVKNVFNETKNLLDKDWNIFSKNCNNSFAECSSQDVVTKPDCNCLYPKAIPSSDPASVSPHQPLAPSMAPVAGLTWEDSEGTEGSSLLPGEQPLHTVDPGSAKQRPPRSTCQSFEPPETPVVKDSTIGGSPQPRPSVGAFNPGMEDILDSAMGTNWVPEEASGEASEIPVPQGTELSPSRPGGGSMQTEPARPSNFLSASSPLPASAKGQQPADVTGTALPRVGPVRPTGQDWNHTPQKTDHPSALLRDPPEPGSPRISSLRPQGLSNPSTLSAQPQLSRSHSSGSVLPLGELEGRRSTRDRRSPAEPEGGPASEGAARPLPRFNSVPLTDTGHERQSEGSFSPQLQESVFHLLVPSVILVLLAVGGLLFYRWRRRSHQEPQRADSPLEQPEGSPLTQDDRQVELPV</sequence>
<reference key="1">
    <citation type="journal article" date="1985" name="Science">
        <title>Molecular cloning of a complementary DNA encoding human macrophage-specific colony-stimulating factor (CSF-1).</title>
        <authorList>
            <person name="Kawasaki E.S."/>
            <person name="Ladner M.B."/>
            <person name="Wang A.M."/>
            <person name="van Arsdell J.N."/>
            <person name="Warren M.K."/>
            <person name="Coyne M.Y."/>
            <person name="Schweickart V.L."/>
            <person name="Lee M.-T."/>
            <person name="Wilson K.J."/>
            <person name="Boosman A."/>
            <person name="Stanley E.R."/>
            <person name="Ralph P."/>
            <person name="Mark D.F."/>
        </authorList>
    </citation>
    <scope>NUCLEOTIDE SEQUENCE [GENOMIC DNA]</scope>
    <scope>PROTEIN SEQUENCE OF 33-44 (ISOFORM 3)</scope>
    <scope>VARIANT SER-489</scope>
    <source>
        <tissue>Pancreatic carcinoma</tissue>
        <tissue>Urine</tissue>
    </source>
</reference>
<reference key="2">
    <citation type="journal article" date="1987" name="Science">
        <title>Human CSF-1: molecular cloning and expression of 4-kb cDNA encoding the human urinary protein.</title>
        <authorList>
            <person name="Wong G.G."/>
            <person name="Temple P.A."/>
            <person name="Leary A.C."/>
            <person name="Witek-Giannotti J.S."/>
            <person name="Yang Y.C."/>
            <person name="Ciarletta A.B."/>
            <person name="Chung M."/>
            <person name="Murtha P."/>
            <person name="Kriz R."/>
            <person name="Kaufman R.J."/>
            <person name="Ferenz C.R."/>
            <person name="Sibley B.S."/>
            <person name="Turner K.J."/>
            <person name="Hewick R.M."/>
            <person name="Clark S.C."/>
            <person name="Yanai N."/>
            <person name="Yokota H."/>
            <person name="Yamada M."/>
            <person name="Saito M."/>
            <person name="Motoyoshi K."/>
            <person name="Takaku F."/>
        </authorList>
    </citation>
    <scope>NUCLEOTIDE SEQUENCE [MRNA] (ISOFORM 1)</scope>
    <scope>PARTIAL PROTEIN SEQUENCE</scope>
    <scope>VARIANT SER-489</scope>
    <source>
        <tissue>Trophoblast</tissue>
        <tissue>Urine</tissue>
    </source>
</reference>
<reference key="3">
    <citation type="journal article" date="1988" name="Mol. Immunol.">
        <title>Human macrophage-colony stimulating factor: alternative RNA and protein processing from a single gene.</title>
        <authorList>
            <person name="Cerretti D.P."/>
            <person name="Wignall J."/>
            <person name="Anderson D."/>
            <person name="Tushinski R.J."/>
            <person name="Gallis B.M."/>
            <person name="Stya M."/>
            <person name="Gillis S."/>
            <person name="Urdal D.L."/>
            <person name="Cosman D."/>
        </authorList>
    </citation>
    <scope>NUCLEOTIDE SEQUENCE [MRNA]</scope>
    <scope>ALTERNATIVE SPLICING</scope>
    <scope>MUTAGENESIS OF ISOFORM 3</scope>
    <scope>VARIANT SER-489</scope>
    <source>
        <tissue>Pancreatic carcinoma</tissue>
    </source>
</reference>
<reference key="4">
    <citation type="journal article" date="1989" name="Biochem. Biophys. Res. Commun.">
        <title>Amino-terminal region of human macrophage colony-stimulating factor (M-CSF) is sufficient for its in vitro biological activity: molecular cloning and expression of carboxyl-terminal deletion mutants of human M-CSF.</title>
        <authorList>
            <person name="Takahashi M."/>
            <person name="Hirato T."/>
            <person name="Takano M."/>
            <person name="Nishida T."/>
            <person name="Nagamura K."/>
            <person name="Kamogashira T."/>
            <person name="Nakai S."/>
            <person name="Hirai Y."/>
        </authorList>
    </citation>
    <scope>NUCLEOTIDE SEQUENCE [MRNA] (ISOFORM 1)</scope>
    <scope>VARIANTS PRO-408 AND SER-489</scope>
    <source>
        <tissue>T lymphoblast</tissue>
    </source>
</reference>
<reference key="5">
    <citation type="journal article" date="2004" name="Nat. Genet.">
        <title>Complete sequencing and characterization of 21,243 full-length human cDNAs.</title>
        <authorList>
            <person name="Ota T."/>
            <person name="Suzuki Y."/>
            <person name="Nishikawa T."/>
            <person name="Otsuki T."/>
            <person name="Sugiyama T."/>
            <person name="Irie R."/>
            <person name="Wakamatsu A."/>
            <person name="Hayashi K."/>
            <person name="Sato H."/>
            <person name="Nagai K."/>
            <person name="Kimura K."/>
            <person name="Makita H."/>
            <person name="Sekine M."/>
            <person name="Obayashi M."/>
            <person name="Nishi T."/>
            <person name="Shibahara T."/>
            <person name="Tanaka T."/>
            <person name="Ishii S."/>
            <person name="Yamamoto J."/>
            <person name="Saito K."/>
            <person name="Kawai Y."/>
            <person name="Isono Y."/>
            <person name="Nakamura Y."/>
            <person name="Nagahari K."/>
            <person name="Murakami K."/>
            <person name="Yasuda T."/>
            <person name="Iwayanagi T."/>
            <person name="Wagatsuma M."/>
            <person name="Shiratori A."/>
            <person name="Sudo H."/>
            <person name="Hosoiri T."/>
            <person name="Kaku Y."/>
            <person name="Kodaira H."/>
            <person name="Kondo H."/>
            <person name="Sugawara M."/>
            <person name="Takahashi M."/>
            <person name="Kanda K."/>
            <person name="Yokoi T."/>
            <person name="Furuya T."/>
            <person name="Kikkawa E."/>
            <person name="Omura Y."/>
            <person name="Abe K."/>
            <person name="Kamihara K."/>
            <person name="Katsuta N."/>
            <person name="Sato K."/>
            <person name="Tanikawa M."/>
            <person name="Yamazaki M."/>
            <person name="Ninomiya K."/>
            <person name="Ishibashi T."/>
            <person name="Yamashita H."/>
            <person name="Murakawa K."/>
            <person name="Fujimori K."/>
            <person name="Tanai H."/>
            <person name="Kimata M."/>
            <person name="Watanabe M."/>
            <person name="Hiraoka S."/>
            <person name="Chiba Y."/>
            <person name="Ishida S."/>
            <person name="Ono Y."/>
            <person name="Takiguchi S."/>
            <person name="Watanabe S."/>
            <person name="Yosida M."/>
            <person name="Hotuta T."/>
            <person name="Kusano J."/>
            <person name="Kanehori K."/>
            <person name="Takahashi-Fujii A."/>
            <person name="Hara H."/>
            <person name="Tanase T.-O."/>
            <person name="Nomura Y."/>
            <person name="Togiya S."/>
            <person name="Komai F."/>
            <person name="Hara R."/>
            <person name="Takeuchi K."/>
            <person name="Arita M."/>
            <person name="Imose N."/>
            <person name="Musashino K."/>
            <person name="Yuuki H."/>
            <person name="Oshima A."/>
            <person name="Sasaki N."/>
            <person name="Aotsuka S."/>
            <person name="Yoshikawa Y."/>
            <person name="Matsunawa H."/>
            <person name="Ichihara T."/>
            <person name="Shiohata N."/>
            <person name="Sano S."/>
            <person name="Moriya S."/>
            <person name="Momiyama H."/>
            <person name="Satoh N."/>
            <person name="Takami S."/>
            <person name="Terashima Y."/>
            <person name="Suzuki O."/>
            <person name="Nakagawa S."/>
            <person name="Senoh A."/>
            <person name="Mizoguchi H."/>
            <person name="Goto Y."/>
            <person name="Shimizu F."/>
            <person name="Wakebe H."/>
            <person name="Hishigaki H."/>
            <person name="Watanabe T."/>
            <person name="Sugiyama A."/>
            <person name="Takemoto M."/>
            <person name="Kawakami B."/>
            <person name="Yamazaki M."/>
            <person name="Watanabe K."/>
            <person name="Kumagai A."/>
            <person name="Itakura S."/>
            <person name="Fukuzumi Y."/>
            <person name="Fujimori Y."/>
            <person name="Komiyama M."/>
            <person name="Tashiro H."/>
            <person name="Tanigami A."/>
            <person name="Fujiwara T."/>
            <person name="Ono T."/>
            <person name="Yamada K."/>
            <person name="Fujii Y."/>
            <person name="Ozaki K."/>
            <person name="Hirao M."/>
            <person name="Ohmori Y."/>
            <person name="Kawabata A."/>
            <person name="Hikiji T."/>
            <person name="Kobatake N."/>
            <person name="Inagaki H."/>
            <person name="Ikema Y."/>
            <person name="Okamoto S."/>
            <person name="Okitani R."/>
            <person name="Kawakami T."/>
            <person name="Noguchi S."/>
            <person name="Itoh T."/>
            <person name="Shigeta K."/>
            <person name="Senba T."/>
            <person name="Matsumura K."/>
            <person name="Nakajima Y."/>
            <person name="Mizuno T."/>
            <person name="Morinaga M."/>
            <person name="Sasaki M."/>
            <person name="Togashi T."/>
            <person name="Oyama M."/>
            <person name="Hata H."/>
            <person name="Watanabe M."/>
            <person name="Komatsu T."/>
            <person name="Mizushima-Sugano J."/>
            <person name="Satoh T."/>
            <person name="Shirai Y."/>
            <person name="Takahashi Y."/>
            <person name="Nakagawa K."/>
            <person name="Okumura K."/>
            <person name="Nagase T."/>
            <person name="Nomura N."/>
            <person name="Kikuchi H."/>
            <person name="Masuho Y."/>
            <person name="Yamashita R."/>
            <person name="Nakai K."/>
            <person name="Yada T."/>
            <person name="Nakamura Y."/>
            <person name="Ohara O."/>
            <person name="Isogai T."/>
            <person name="Sugano S."/>
        </authorList>
    </citation>
    <scope>NUCLEOTIDE SEQUENCE [LARGE SCALE MRNA] (ISOFORM 1)</scope>
    <scope>VARIANT SER-489</scope>
    <source>
        <tissue>Placenta</tissue>
    </source>
</reference>
<reference key="6">
    <citation type="journal article" date="2006" name="Nature">
        <title>The DNA sequence and biological annotation of human chromosome 1.</title>
        <authorList>
            <person name="Gregory S.G."/>
            <person name="Barlow K.F."/>
            <person name="McLay K.E."/>
            <person name="Kaul R."/>
            <person name="Swarbreck D."/>
            <person name="Dunham A."/>
            <person name="Scott C.E."/>
            <person name="Howe K.L."/>
            <person name="Woodfine K."/>
            <person name="Spencer C.C.A."/>
            <person name="Jones M.C."/>
            <person name="Gillson C."/>
            <person name="Searle S."/>
            <person name="Zhou Y."/>
            <person name="Kokocinski F."/>
            <person name="McDonald L."/>
            <person name="Evans R."/>
            <person name="Phillips K."/>
            <person name="Atkinson A."/>
            <person name="Cooper R."/>
            <person name="Jones C."/>
            <person name="Hall R.E."/>
            <person name="Andrews T.D."/>
            <person name="Lloyd C."/>
            <person name="Ainscough R."/>
            <person name="Almeida J.P."/>
            <person name="Ambrose K.D."/>
            <person name="Anderson F."/>
            <person name="Andrew R.W."/>
            <person name="Ashwell R.I.S."/>
            <person name="Aubin K."/>
            <person name="Babbage A.K."/>
            <person name="Bagguley C.L."/>
            <person name="Bailey J."/>
            <person name="Beasley H."/>
            <person name="Bethel G."/>
            <person name="Bird C.P."/>
            <person name="Bray-Allen S."/>
            <person name="Brown J.Y."/>
            <person name="Brown A.J."/>
            <person name="Buckley D."/>
            <person name="Burton J."/>
            <person name="Bye J."/>
            <person name="Carder C."/>
            <person name="Chapman J.C."/>
            <person name="Clark S.Y."/>
            <person name="Clarke G."/>
            <person name="Clee C."/>
            <person name="Cobley V."/>
            <person name="Collier R.E."/>
            <person name="Corby N."/>
            <person name="Coville G.J."/>
            <person name="Davies J."/>
            <person name="Deadman R."/>
            <person name="Dunn M."/>
            <person name="Earthrowl M."/>
            <person name="Ellington A.G."/>
            <person name="Errington H."/>
            <person name="Frankish A."/>
            <person name="Frankland J."/>
            <person name="French L."/>
            <person name="Garner P."/>
            <person name="Garnett J."/>
            <person name="Gay L."/>
            <person name="Ghori M.R.J."/>
            <person name="Gibson R."/>
            <person name="Gilby L.M."/>
            <person name="Gillett W."/>
            <person name="Glithero R.J."/>
            <person name="Grafham D.V."/>
            <person name="Griffiths C."/>
            <person name="Griffiths-Jones S."/>
            <person name="Grocock R."/>
            <person name="Hammond S."/>
            <person name="Harrison E.S.I."/>
            <person name="Hart E."/>
            <person name="Haugen E."/>
            <person name="Heath P.D."/>
            <person name="Holmes S."/>
            <person name="Holt K."/>
            <person name="Howden P.J."/>
            <person name="Hunt A.R."/>
            <person name="Hunt S.E."/>
            <person name="Hunter G."/>
            <person name="Isherwood J."/>
            <person name="James R."/>
            <person name="Johnson C."/>
            <person name="Johnson D."/>
            <person name="Joy A."/>
            <person name="Kay M."/>
            <person name="Kershaw J.K."/>
            <person name="Kibukawa M."/>
            <person name="Kimberley A.M."/>
            <person name="King A."/>
            <person name="Knights A.J."/>
            <person name="Lad H."/>
            <person name="Laird G."/>
            <person name="Lawlor S."/>
            <person name="Leongamornlert D.A."/>
            <person name="Lloyd D.M."/>
            <person name="Loveland J."/>
            <person name="Lovell J."/>
            <person name="Lush M.J."/>
            <person name="Lyne R."/>
            <person name="Martin S."/>
            <person name="Mashreghi-Mohammadi M."/>
            <person name="Matthews L."/>
            <person name="Matthews N.S.W."/>
            <person name="McLaren S."/>
            <person name="Milne S."/>
            <person name="Mistry S."/>
            <person name="Moore M.J.F."/>
            <person name="Nickerson T."/>
            <person name="O'Dell C.N."/>
            <person name="Oliver K."/>
            <person name="Palmeiri A."/>
            <person name="Palmer S.A."/>
            <person name="Parker A."/>
            <person name="Patel D."/>
            <person name="Pearce A.V."/>
            <person name="Peck A.I."/>
            <person name="Pelan S."/>
            <person name="Phelps K."/>
            <person name="Phillimore B.J."/>
            <person name="Plumb R."/>
            <person name="Rajan J."/>
            <person name="Raymond C."/>
            <person name="Rouse G."/>
            <person name="Saenphimmachak C."/>
            <person name="Sehra H.K."/>
            <person name="Sheridan E."/>
            <person name="Shownkeen R."/>
            <person name="Sims S."/>
            <person name="Skuce C.D."/>
            <person name="Smith M."/>
            <person name="Steward C."/>
            <person name="Subramanian S."/>
            <person name="Sycamore N."/>
            <person name="Tracey A."/>
            <person name="Tromans A."/>
            <person name="Van Helmond Z."/>
            <person name="Wall M."/>
            <person name="Wallis J.M."/>
            <person name="White S."/>
            <person name="Whitehead S.L."/>
            <person name="Wilkinson J.E."/>
            <person name="Willey D.L."/>
            <person name="Williams H."/>
            <person name="Wilming L."/>
            <person name="Wray P.W."/>
            <person name="Wu Z."/>
            <person name="Coulson A."/>
            <person name="Vaudin M."/>
            <person name="Sulston J.E."/>
            <person name="Durbin R.M."/>
            <person name="Hubbard T."/>
            <person name="Wooster R."/>
            <person name="Dunham I."/>
            <person name="Carter N.P."/>
            <person name="McVean G."/>
            <person name="Ross M.T."/>
            <person name="Harrow J."/>
            <person name="Olson M.V."/>
            <person name="Beck S."/>
            <person name="Rogers J."/>
            <person name="Bentley D.R."/>
        </authorList>
    </citation>
    <scope>NUCLEOTIDE SEQUENCE [LARGE SCALE GENOMIC DNA]</scope>
</reference>
<reference key="7">
    <citation type="submission" date="2005-07" db="EMBL/GenBank/DDBJ databases">
        <authorList>
            <person name="Mural R.J."/>
            <person name="Istrail S."/>
            <person name="Sutton G.G."/>
            <person name="Florea L."/>
            <person name="Halpern A.L."/>
            <person name="Mobarry C.M."/>
            <person name="Lippert R."/>
            <person name="Walenz B."/>
            <person name="Shatkay H."/>
            <person name="Dew I."/>
            <person name="Miller J.R."/>
            <person name="Flanigan M.J."/>
            <person name="Edwards N.J."/>
            <person name="Bolanos R."/>
            <person name="Fasulo D."/>
            <person name="Halldorsson B.V."/>
            <person name="Hannenhalli S."/>
            <person name="Turner R."/>
            <person name="Yooseph S."/>
            <person name="Lu F."/>
            <person name="Nusskern D.R."/>
            <person name="Shue B.C."/>
            <person name="Zheng X.H."/>
            <person name="Zhong F."/>
            <person name="Delcher A.L."/>
            <person name="Huson D.H."/>
            <person name="Kravitz S.A."/>
            <person name="Mouchard L."/>
            <person name="Reinert K."/>
            <person name="Remington K.A."/>
            <person name="Clark A.G."/>
            <person name="Waterman M.S."/>
            <person name="Eichler E.E."/>
            <person name="Adams M.D."/>
            <person name="Hunkapiller M.W."/>
            <person name="Myers E.W."/>
            <person name="Venter J.C."/>
        </authorList>
    </citation>
    <scope>NUCLEOTIDE SEQUENCE [LARGE SCALE GENOMIC DNA]</scope>
    <scope>VARIANT SER-489</scope>
</reference>
<reference key="8">
    <citation type="journal article" date="2004" name="Genome Res.">
        <title>The status, quality, and expansion of the NIH full-length cDNA project: the Mammalian Gene Collection (MGC).</title>
        <authorList>
            <consortium name="The MGC Project Team"/>
        </authorList>
    </citation>
    <scope>NUCLEOTIDE SEQUENCE [LARGE SCALE MRNA] (ISOFORM 1)</scope>
    <scope>VARIANT SER-489</scope>
    <source>
        <tissue>Kidney</tissue>
    </source>
</reference>
<reference key="9">
    <citation type="journal article" date="1987" name="EMBO J.">
        <title>Human CSF-1: gene structure and alternative splicing of mRNA precursors.</title>
        <authorList>
            <person name="Ladner M.B."/>
            <person name="Martin G.A."/>
            <person name="Noble J.A."/>
            <person name="Nikoloff D.M."/>
            <person name="Tal R."/>
            <person name="Kawasaki E.S."/>
            <person name="White T.J."/>
        </authorList>
    </citation>
    <scope>NUCLEOTIDE SEQUENCE [GENOMIC DNA / MRNA] OF 1-13 AND 19-554 (ISOFORM 1)</scope>
    <scope>VARIANT SER-489</scope>
    <source>
        <tissue>Pancreatic carcinoma</tissue>
    </source>
</reference>
<reference key="10">
    <citation type="journal article" date="1991" name="Mol. Endocrinol.">
        <title>Expression of colony-stimulating factor-1 (CSF-1) messenger RNA in human endometrial glands during the menstrual cycle: molecular cloning of a novel transcript that predicts a cell surface form of CSF-1.</title>
        <authorList>
            <person name="Pampfer S."/>
            <person name="Tabibzadeh S."/>
            <person name="Chuan F.-C."/>
            <person name="Pollard J.W."/>
        </authorList>
    </citation>
    <scope>NUCLEOTIDE SEQUENCE [MRNA] OF 13-554 (ISOFORM 3)</scope>
    <scope>VARIANT SER-489</scope>
    <source>
        <tissue>Endometrium</tissue>
    </source>
</reference>
<reference key="11">
    <citation type="journal article" date="1993" name="J. Biochem.">
        <title>The structure of recombinant human carboxy-terminal-truncated macrophage colony-stimulating factor derived from mammalian cells.</title>
        <authorList>
            <person name="Yamanishi K."/>
            <person name="Yasuda S."/>
            <person name="Masui Y."/>
            <person name="Nishida T."/>
            <person name="Shindo Y."/>
            <person name="Takano M."/>
            <person name="Ohmoto Y."/>
            <person name="Takahashi M."/>
            <person name="Adachi M."/>
        </authorList>
    </citation>
    <scope>PROTEIN SEQUENCE OF 33-185 (ISOFORM 1)</scope>
    <source>
        <tissue>T lymphoblast</tissue>
    </source>
</reference>
<reference key="12">
    <citation type="journal article" date="1987" name="FEBS Lett.">
        <title>Macrophage colony-stimulating factor purified from normal human urine. Amino-terminal sequence and amino acid composition.</title>
        <authorList>
            <person name="Sakai N."/>
            <person name="Umeda T."/>
            <person name="Suzuki H."/>
            <person name="Ishimatsu Y."/>
            <person name="Shikita M."/>
        </authorList>
    </citation>
    <scope>PROTEIN SEQUENCE OF 33-76</scope>
</reference>
<reference key="13">
    <citation type="journal article" date="1994" name="J. Biol. Chem.">
        <title>Structural analysis of proteoglycan macrophage colony-stimulating factor.</title>
        <authorList>
            <person name="Kimura F."/>
            <person name="Suzu S."/>
            <person name="Nakamura Y."/>
            <person name="Wakimoto N."/>
            <person name="Kanatani Y."/>
            <person name="Yanai N."/>
            <person name="Nagata N."/>
            <person name="Motoyoshi K."/>
        </authorList>
    </citation>
    <scope>PROTEIN SEQUENCE OF 33-38</scope>
    <scope>FUNCTION</scope>
    <scope>SUBUNIT</scope>
    <scope>GLYCOSYLATION AT SER-309</scope>
    <scope>MUTAGENESIS OF ARG-252; SER-309 AND ARG-444</scope>
</reference>
<reference key="14">
    <citation type="journal article" date="1988" name="Biochem. Biophys. Res. Commun.">
        <title>Macrophage colony-stimulating factor is produced by human T lymphoblastoid cell line, CEM-ON: identification by amino-terminal amino acid sequence analysis.</title>
        <authorList>
            <person name="Takahashi M."/>
            <person name="Hong Y.M."/>
            <person name="Yasuda S."/>
            <person name="Takano M."/>
            <person name="Kawai K."/>
            <person name="Nakai S."/>
            <person name="Hirai Y."/>
        </authorList>
    </citation>
    <scope>PROTEIN SEQUENCE OF 35-61</scope>
</reference>
<reference key="15">
    <citation type="journal article" date="1987" name="Mol. Cell. Biol.">
        <title>Synthesis of membrane-bound colony-stimulating factor 1 (CSF-1) and downmodulation of CSF-1 receptors in NIH 3T3 cells transformed by cotransfection of the human CSF-1 and c-fms (CSF-1 receptor) genes.</title>
        <authorList>
            <person name="Rettenmier C.W."/>
            <person name="Roussel M.F."/>
            <person name="Ashmun R.A."/>
            <person name="Ralph P."/>
            <person name="Price K."/>
            <person name="Sherr C.J."/>
        </authorList>
    </citation>
    <scope>CHARACTERIZATION (ISOFORM 3)</scope>
</reference>
<reference key="16">
    <citation type="journal article" date="1988" name="Mol. Cell. Biol.">
        <title>Differential processing of colony-stimulating factor 1 precursors encoded by two human cDNAs.</title>
        <authorList>
            <person name="Rettenmier C.W."/>
            <person name="Roussel M.F."/>
        </authorList>
    </citation>
    <scope>PROTEOLYTIC PROCESSING</scope>
    <scope>SUBUNIT</scope>
    <scope>GLYCOSYLATION</scope>
    <scope>SUBCELLULAR LOCATION</scope>
</reference>
<reference key="17">
    <citation type="journal article" date="1992" name="J. Biol. Chem.">
        <title>Identification of a high molecular weight macrophage colony-stimulating factor as a glycosaminoglycan-containing species.</title>
        <authorList>
            <person name="Suzu S."/>
            <person name="Ohtsuki T."/>
            <person name="Yanai N."/>
            <person name="Takatsu Z."/>
            <person name="Kawashima T."/>
            <person name="Takaku F."/>
            <person name="Nagata N."/>
            <person name="Motoyoshi K."/>
        </authorList>
    </citation>
    <scope>PROTEOLYTIC PROCESSING</scope>
    <scope>SUBUNIT</scope>
    <scope>SUBCELLULAR LOCATION</scope>
    <scope>STRUCTURE OF CARBOHYDRATES</scope>
</reference>
<reference key="18">
    <citation type="journal article" date="1993" name="Biochemistry">
        <title>Assignment of the inter- and intramolecular disulfide linkages in recombinant human macrophage colony stimulating factor using fast atom bombardment mass spectrometry.</title>
        <authorList>
            <person name="Glocker M.O."/>
            <person name="Arbogast B."/>
            <person name="Schreurs J."/>
            <person name="Deinzer M.L."/>
        </authorList>
    </citation>
    <scope>DISULFIDE BONDS</scope>
</reference>
<reference key="19">
    <citation type="journal article" date="2004" name="Trends Cell Biol.">
        <title>CSF-1 regulation of the wandering macrophage: complexity in action.</title>
        <authorList>
            <person name="Pixley F.J."/>
            <person name="Stanley E.R."/>
        </authorList>
    </citation>
    <scope>REVIEW ON FUNCTION AND SIGNALING PATHWAYS</scope>
</reference>
<reference key="20">
    <citation type="journal article" date="2006" name="Curr. Opin. Immunol.">
        <title>Colony-stimulating factor-1 in immunity and inflammation.</title>
        <authorList>
            <person name="Chitu V."/>
            <person name="Stanley E.R."/>
        </authorList>
    </citation>
    <scope>REVIEW ON FUNCTION IN IMMUNITY AND INFLAMMATION</scope>
    <scope>ROLE IN DISEASE</scope>
</reference>
<reference key="21">
    <citation type="journal article" date="2008" name="Int. Immunopharmacol.">
        <title>Macrophage colony stimulating factor: not just for macrophages anymore! A gateway into complex biologies.</title>
        <authorList>
            <person name="Douglass T.G."/>
            <person name="Driggers L."/>
            <person name="Zhang J.G."/>
            <person name="Hoa N."/>
            <person name="Delgado C."/>
            <person name="Williams C.C."/>
            <person name="Dan Q."/>
            <person name="Sanchez R."/>
            <person name="Jeffes E.W."/>
            <person name="Wepsic H.T."/>
            <person name="Myers M.P."/>
            <person name="Koths K."/>
            <person name="Jadus M.R."/>
        </authorList>
    </citation>
    <scope>REVIEW ON FUNCTION AND SIGNALING PATHWAYS</scope>
</reference>
<reference key="22">
    <citation type="journal article" date="2009" name="Cancer Res.">
        <title>Invasion of human breast cancer cells in vivo requires both paracrine and autocrine loops involving the colony-stimulating factor-1 receptor.</title>
        <authorList>
            <person name="Patsialou A."/>
            <person name="Wyckoff J."/>
            <person name="Wang Y."/>
            <person name="Goswami S."/>
            <person name="Stanley E.R."/>
            <person name="Condeelis J.S."/>
        </authorList>
    </citation>
    <scope>ROLE IN DISEASE</scope>
</reference>
<reference key="23">
    <citation type="journal article" date="2010" name="Cytokine">
        <title>Macrophage-colony stimulating factor and interleukin-34 induce chemokines in human whole blood.</title>
        <authorList>
            <person name="Eda H."/>
            <person name="Zhang J."/>
            <person name="Keith R.H."/>
            <person name="Michener M."/>
            <person name="Beidler D.R."/>
            <person name="Monahan J.B."/>
        </authorList>
    </citation>
    <scope>FUNCTION IN RELEASE OF PRO-INFLAMMATORY CHEMOKINES</scope>
</reference>
<reference key="24">
    <citation type="journal article" date="2010" name="J. Leukoc. Biol.">
        <title>Functional overlap but differential expression of CSF-1 and IL-34 in their CSF-1 receptor-mediated regulation of myeloid cells.</title>
        <authorList>
            <person name="Wei S."/>
            <person name="Nandi S."/>
            <person name="Chitu V."/>
            <person name="Yeung Y.G."/>
            <person name="Yu W."/>
            <person name="Huang M."/>
            <person name="Williams L.T."/>
            <person name="Lin H."/>
            <person name="Stanley E.R."/>
        </authorList>
    </citation>
    <scope>FUNCTION</scope>
    <scope>INTERACTION WITH CSF1R</scope>
</reference>
<reference key="25">
    <citation type="journal article" date="2012" name="Mol. Cell. Proteomics">
        <title>Human urinary glycoproteomics; attachment site specific analysis of N- and O-linked glycosylations by CID and ECD.</title>
        <authorList>
            <person name="Halim A."/>
            <person name="Nilsson J."/>
            <person name="Ruetschi U."/>
            <person name="Hesse C."/>
            <person name="Larson G."/>
        </authorList>
    </citation>
    <scope>GLYCOSYLATION AT THR-363 AND THR-365</scope>
    <scope>STRUCTURE OF CARBOHYDRATES</scope>
    <scope>IDENTIFICATION BY MASS SPECTROMETRY</scope>
</reference>
<reference key="26">
    <citation type="journal article" date="2013" name="J. Proteome Res.">
        <title>Toward a comprehensive characterization of a human cancer cell phosphoproteome.</title>
        <authorList>
            <person name="Zhou H."/>
            <person name="Di Palma S."/>
            <person name="Preisinger C."/>
            <person name="Peng M."/>
            <person name="Polat A.N."/>
            <person name="Heck A.J."/>
            <person name="Mohammed S."/>
        </authorList>
    </citation>
    <scope>IDENTIFICATION BY MASS SPECTROMETRY [LARGE SCALE ANALYSIS]</scope>
    <source>
        <tissue>Erythroleukemia</tissue>
    </source>
</reference>
<reference key="27">
    <citation type="journal article" date="2013" name="J. Proteome Res.">
        <title>LC-MS/MS characterization of O-glycosylation sites and glycan structures of human cerebrospinal fluid glycoproteins.</title>
        <authorList>
            <person name="Halim A."/>
            <person name="Ruetschi U."/>
            <person name="Larson G."/>
            <person name="Nilsson J."/>
        </authorList>
    </citation>
    <scope>GLYCOSYLATION</scope>
    <scope>IDENTIFICATION BY MASS SPECTROMETRY</scope>
</reference>
<reference key="28">
    <citation type="journal article" date="2015" name="Cell">
        <title>A single kinase generates the majority of the secreted phosphoproteome.</title>
        <authorList>
            <person name="Tagliabracci V.S."/>
            <person name="Wiley S.E."/>
            <person name="Guo X."/>
            <person name="Kinch L.N."/>
            <person name="Durrant E."/>
            <person name="Wen J."/>
            <person name="Xiao J."/>
            <person name="Cui J."/>
            <person name="Nguyen K.B."/>
            <person name="Engel J.L."/>
            <person name="Coon J.J."/>
            <person name="Grishin N."/>
            <person name="Pinna L.A."/>
            <person name="Pagliarini D.J."/>
            <person name="Dixon J.E."/>
        </authorList>
    </citation>
    <scope>PHOSPHORYLATION AT THR-266</scope>
</reference>
<reference key="29">
    <citation type="journal article" date="1992" name="Science">
        <title>Three-dimensional structure of dimeric human recombinant macrophage colony-stimulating factor.</title>
        <authorList>
            <person name="Pandit J."/>
            <person name="Bohm A."/>
            <person name="Jancarik J."/>
            <person name="Halenbeck R."/>
            <person name="Koths K."/>
            <person name="Kim S.H."/>
        </authorList>
    </citation>
    <scope>X-RAY CRYSTALLOGRAPHY (2.5 ANGSTROMS) OF 33-190</scope>
</reference>
<feature type="signal peptide" evidence="20 22">
    <location>
        <begin position="1"/>
        <end position="32"/>
    </location>
</feature>
<feature type="chain" id="PRO_0000005857" description="Macrophage colony-stimulating factor 1">
    <location>
        <begin position="33"/>
        <end position="554"/>
    </location>
</feature>
<feature type="chain" id="PRO_0000296231" description="Processed macrophage colony-stimulating factor 1" evidence="1">
    <location>
        <begin position="33"/>
        <end position="450"/>
    </location>
</feature>
<feature type="chain" id="PRO_0000457791" description="Macrophage colony-stimulating factor 1 43 kDa subunit" evidence="22">
    <location>
        <begin position="33"/>
        <end position="255"/>
    </location>
</feature>
<feature type="topological domain" description="Lumenal" evidence="2">
    <location>
        <begin position="33"/>
        <end position="496"/>
    </location>
</feature>
<feature type="transmembrane region" description="Helical" evidence="2">
    <location>
        <begin position="497"/>
        <end position="517"/>
    </location>
</feature>
<feature type="topological domain" description="Cytoplasmic" evidence="2">
    <location>
        <begin position="518"/>
        <end position="554"/>
    </location>
</feature>
<feature type="region of interest" description="Disordered" evidence="3">
    <location>
        <begin position="224"/>
        <end position="488"/>
    </location>
</feature>
<feature type="region of interest" description="O-glycosylated at one site">
    <location>
        <begin position="406"/>
        <end position="426"/>
    </location>
</feature>
<feature type="region of interest" description="Disordered" evidence="3">
    <location>
        <begin position="526"/>
        <end position="554"/>
    </location>
</feature>
<feature type="compositionally biased region" description="Low complexity" evidence="3">
    <location>
        <begin position="344"/>
        <end position="354"/>
    </location>
</feature>
<feature type="compositionally biased region" description="Polar residues" evidence="3">
    <location>
        <begin position="404"/>
        <end position="433"/>
    </location>
</feature>
<feature type="compositionally biased region" description="Basic and acidic residues" evidence="3">
    <location>
        <begin position="440"/>
        <end position="453"/>
    </location>
</feature>
<feature type="compositionally biased region" description="Basic and acidic residues" evidence="3">
    <location>
        <begin position="545"/>
        <end position="554"/>
    </location>
</feature>
<feature type="modified residue" description="Phosphothreonine; by FAM20C" evidence="15">
    <location>
        <position position="266"/>
    </location>
</feature>
<feature type="glycosylation site" description="N-linked (GlcNAc...) asparagine" evidence="2">
    <location>
        <position position="154"/>
    </location>
</feature>
<feature type="glycosylation site" description="N-linked (GlcNAc...) asparagine" evidence="2">
    <location>
        <position position="172"/>
    </location>
</feature>
<feature type="glycosylation site" description="O-linked (Xyl...) (chondroitin sulfate) serine" evidence="22">
    <location>
        <position position="309"/>
    </location>
</feature>
<feature type="glycosylation site" description="O-linked (GalNAc...) threonine" evidence="12">
    <location>
        <position position="363"/>
    </location>
</feature>
<feature type="glycosylation site" description="O-linked (GalNAc...) threonine" evidence="12">
    <location>
        <position position="365"/>
    </location>
</feature>
<feature type="disulfide bond" evidence="23">
    <location>
        <begin position="39"/>
        <end position="122"/>
    </location>
</feature>
<feature type="disulfide bond" description="Interchain" evidence="23">
    <location>
        <position position="63"/>
    </location>
</feature>
<feature type="disulfide bond" evidence="23">
    <location>
        <begin position="80"/>
        <end position="171"/>
    </location>
</feature>
<feature type="disulfide bond" evidence="23">
    <location>
        <begin position="134"/>
        <end position="178"/>
    </location>
</feature>
<feature type="disulfide bond" description="Interchain" evidence="23">
    <location>
        <position position="189"/>
    </location>
</feature>
<feature type="disulfide bond" description="Interchain" evidence="23">
    <location>
        <position position="191"/>
    </location>
</feature>
<feature type="splice variant" id="VSP_001187" description="In isoform 3." evidence="25">
    <location>
        <begin position="182"/>
        <end position="479"/>
    </location>
</feature>
<feature type="splice variant" id="VSP_001188" description="In isoform 2." evidence="27">
    <location>
        <begin position="365"/>
        <end position="480"/>
    </location>
</feature>
<feature type="sequence variant" id="VAR_048810" description="In dbSNP:rs12565736.">
    <original>S</original>
    <variation>N</variation>
    <location>
        <position position="341"/>
    </location>
</feature>
<feature type="sequence variant" id="VAR_020454" description="In dbSNP:rs1058885." evidence="16">
    <original>L</original>
    <variation>P</variation>
    <location>
        <position position="408"/>
    </location>
</feature>
<feature type="sequence variant" id="VAR_029320" description="In dbSNP:rs2229165.">
    <original>G</original>
    <variation>R</variation>
    <location>
        <position position="438"/>
    </location>
</feature>
<feature type="sequence variant" id="VAR_048811" description="In dbSNP:rs333971." evidence="4 6 8 14 16 17 19 21 24">
    <original>F</original>
    <variation>S</variation>
    <location>
        <position position="489"/>
    </location>
</feature>
<feature type="sequence variant" id="VAR_020455" description="In dbSNP:rs12721516.">
    <original>S</original>
    <variation>F</variation>
    <location>
        <position position="496"/>
    </location>
</feature>
<feature type="sequence variant" id="VAR_022146" description="In dbSNP:rs2229167.">
    <original>A</original>
    <variation>V</variation>
    <location>
        <position position="531"/>
    </location>
</feature>
<feature type="mutagenesis site" description="Loss of 43 kDa subunit." evidence="22">
    <original>R</original>
    <variation>A</variation>
    <location>
        <position position="252"/>
    </location>
</feature>
<feature type="mutagenesis site" description="Loss of chondroitin sulfate attachment." evidence="22">
    <original>S</original>
    <variation>A</variation>
    <location>
        <position position="309"/>
    </location>
</feature>
<feature type="mutagenesis site" description="Does not affect production of 150-200 kDa subunit." evidence="22">
    <original>R</original>
    <variation>A</variation>
    <location>
        <position position="444"/>
    </location>
</feature>
<feature type="mutagenesis site" description="Produces biologically active protein which is secreted." evidence="14">
    <location>
        <begin position="489"/>
        <end position="554"/>
    </location>
</feature>
<feature type="sequence conflict" description="In Ref. 12; AA sequence." evidence="27" ref="12">
    <original>F</original>
    <variation>S</variation>
    <location>
        <position position="69"/>
    </location>
</feature>
<feature type="sequence conflict" description="In Ref. 1; AAB59527, 3; AAA59572/AAA64849 and 10; AAA52120." evidence="27" ref="1 3 10">
    <original>D</original>
    <variation>Y</variation>
    <location>
        <position position="91"/>
    </location>
</feature>
<feature type="sequence conflict" description="In Ref. 2; AAA52117." evidence="27" ref="2">
    <original>PNA</original>
    <variation>ANP</variation>
    <location>
        <begin position="104"/>
        <end position="106"/>
    </location>
</feature>
<feature type="sequence conflict" description="In Ref. 2; AAA52117." evidence="27" ref="2">
    <original>G</original>
    <variation>A</variation>
    <location>
        <position position="364"/>
    </location>
</feature>
<feature type="sequence conflict" description="In Ref. 2; AAA52117." evidence="27" ref="2">
    <original>R</original>
    <variation>M</variation>
    <location>
        <position position="374"/>
    </location>
</feature>
<feature type="sequence conflict" description="In Ref. 2; AAA52117." evidence="27" ref="2">
    <original>G</original>
    <variation>A</variation>
    <location>
        <position position="412"/>
    </location>
</feature>
<feature type="sequence conflict" description="In Ref. 2; AAA52117." evidence="27" ref="2">
    <original>R</original>
    <variation>T</variation>
    <location>
        <position position="450"/>
    </location>
</feature>
<feature type="sequence conflict" description="In Ref. 2; AAA52117." evidence="27" ref="2">
    <original>GG</original>
    <variation>AA</variation>
    <location>
        <begin position="457"/>
        <end position="458"/>
    </location>
</feature>
<feature type="sequence conflict" description="In Ref. 4; AAA59573." evidence="27" ref="4">
    <location>
        <position position="480"/>
    </location>
</feature>
<feature type="helix" evidence="28">
    <location>
        <begin position="37"/>
        <end position="41"/>
    </location>
</feature>
<feature type="helix" evidence="28">
    <location>
        <begin position="45"/>
        <end position="56"/>
    </location>
</feature>
<feature type="strand" evidence="28">
    <location>
        <begin position="65"/>
        <end position="70"/>
    </location>
</feature>
<feature type="turn" evidence="28">
    <location>
        <begin position="72"/>
        <end position="74"/>
    </location>
</feature>
<feature type="helix" evidence="28">
    <location>
        <begin position="78"/>
        <end position="95"/>
    </location>
</feature>
<feature type="helix" evidence="28">
    <location>
        <begin position="104"/>
        <end position="119"/>
    </location>
</feature>
<feature type="helix" evidence="28">
    <location>
        <begin position="120"/>
        <end position="122"/>
    </location>
</feature>
<feature type="helix" evidence="28">
    <location>
        <begin position="128"/>
        <end position="130"/>
    </location>
</feature>
<feature type="strand" evidence="28">
    <location>
        <begin position="135"/>
        <end position="140"/>
    </location>
</feature>
<feature type="helix" evidence="28">
    <location>
        <begin position="142"/>
        <end position="162"/>
    </location>
</feature>
<feature type="helix" evidence="28">
    <location>
        <begin position="166"/>
        <end position="168"/>
    </location>
</feature>
<feature type="helix" evidence="28">
    <location>
        <begin position="172"/>
        <end position="176"/>
    </location>
</feature>
<comment type="function">
    <text evidence="7 9 10 11 22">Cytokine that plays an essential role in the regulation of survival, proliferation and differentiation of hematopoietic precursor cells, especially mononuclear phagocytes, such as macrophages and monocytes. Promotes the release of pro-inflammatory chemokines, and thereby plays an important role in innate immunity and in inflammatory processes. Plays an important role in the regulation of osteoclast proliferation and differentiation, the regulation of bone resorption, and is required for normal bone development. Required for normal male and female fertility. Promotes reorganization of the actin cytoskeleton, regulates formation of membrane ruffles, cell adhesion and cell migration. Plays a role in lipoprotein clearance.</text>
</comment>
<comment type="subunit">
    <text evidence="5 10 18 22 23">Homodimer or heterodimer; disulfide-linked (PubMed:1531650, PubMed:3264877, PubMed:8422357). Likely to exist in multiple forms: homodimer consisting of 2 identical 150-200 kDa proteoglycan subunits, heterodimer consisting of a 150-200 kDa proteoglycan subunit and a truncated 43 kDa subunit, and homodimer consisting of 2 identical 43 kDa subunits (PubMed:8051056). Interacts with CSF1R (PubMed:20504948).</text>
</comment>
<comment type="interaction">
    <interactant intactId="EBI-2872294">
        <id>P09603</id>
    </interactant>
    <interactant intactId="EBI-2872294">
        <id>P09603</id>
        <label>CSF1</label>
    </interactant>
    <organismsDiffer>false</organismsDiffer>
    <experiments>8</experiments>
</comment>
<comment type="interaction">
    <interactant intactId="EBI-2872294">
        <id>P09603</id>
    </interactant>
    <interactant intactId="EBI-2835440">
        <id>P07333</id>
        <label>CSF1R</label>
    </interactant>
    <organismsDiffer>false</organismsDiffer>
    <experiments>13</experiments>
</comment>
<comment type="interaction">
    <interactant intactId="EBI-2872294">
        <id>P09603</id>
    </interactant>
    <interactant intactId="EBI-3867333">
        <id>A8MQ03</id>
        <label>CYSRT1</label>
    </interactant>
    <organismsDiffer>false</organismsDiffer>
    <experiments>3</experiments>
</comment>
<comment type="interaction">
    <interactant intactId="EBI-2872294">
        <id>P09603</id>
    </interactant>
    <interactant intactId="EBI-741101">
        <id>Q13643</id>
        <label>FHL3</label>
    </interactant>
    <organismsDiffer>false</organismsDiffer>
    <experiments>3</experiments>
</comment>
<comment type="interaction">
    <interactant intactId="EBI-2872294">
        <id>P09603</id>
    </interactant>
    <interactant intactId="EBI-11959885">
        <id>Q07627</id>
        <label>KRTAP1-1</label>
    </interactant>
    <organismsDiffer>false</organismsDiffer>
    <experiments>3</experiments>
</comment>
<comment type="interaction">
    <interactant intactId="EBI-2872294">
        <id>P09603</id>
    </interactant>
    <interactant intactId="EBI-10171774">
        <id>P60410</id>
        <label>KRTAP10-8</label>
    </interactant>
    <organismsDiffer>false</organismsDiffer>
    <experiments>3</experiments>
</comment>
<comment type="interaction">
    <interactant intactId="EBI-2872294">
        <id>P09603</id>
    </interactant>
    <interactant intactId="EBI-11522433">
        <id>Q5JR59-3</id>
        <label>MTUS2</label>
    </interactant>
    <organismsDiffer>false</organismsDiffer>
    <experiments>3</experiments>
</comment>
<comment type="interaction">
    <interactant intactId="EBI-2872294">
        <id>P09603</id>
    </interactant>
    <interactant intactId="EBI-945833">
        <id>Q7Z3S9</id>
        <label>NOTCH2NLA</label>
    </interactant>
    <organismsDiffer>false</organismsDiffer>
    <experiments>3</experiments>
</comment>
<comment type="interaction">
    <interactant intactId="EBI-2872294">
        <id>P09603</id>
    </interactant>
    <interactant intactId="EBI-347996">
        <id>O43765</id>
        <label>SGTA</label>
    </interactant>
    <organismsDiffer>false</organismsDiffer>
    <experiments>6</experiments>
</comment>
<comment type="interaction">
    <interactant intactId="EBI-2872294">
        <id>P09603</id>
    </interactant>
    <interactant intactId="EBI-16007073">
        <id>P03228</id>
        <label>BARF1</label>
    </interactant>
    <organismsDiffer>true</organismsDiffer>
    <experiments>9</experiments>
</comment>
<comment type="interaction">
    <interactant intactId="EBI-2872294">
        <id>P09603</id>
    </interactant>
    <interactant intactId="EBI-2620133">
        <id>P0CW72</id>
        <label>BARF1</label>
    </interactant>
    <organismsDiffer>true</organismsDiffer>
    <experiments>3</experiments>
</comment>
<comment type="interaction">
    <interactant intactId="EBI-2872294">
        <id>P09603</id>
    </interactant>
    <interactant intactId="EBI-6305373">
        <id>P09581</id>
        <label>Csf1r</label>
    </interactant>
    <organismsDiffer>true</organismsDiffer>
    <experiments>2</experiments>
</comment>
<comment type="subcellular location">
    <subcellularLocation>
        <location evidence="5 18">Cell membrane</location>
        <topology evidence="5 18">Single-pass type I membrane protein</topology>
    </subcellularLocation>
</comment>
<comment type="subcellular location">
    <molecule>Processed macrophage colony-stimulating factor 1</molecule>
    <subcellularLocation>
        <location>Secreted</location>
        <location>Extracellular space</location>
    </subcellularLocation>
</comment>
<comment type="alternative products">
    <event type="alternative splicing"/>
    <isoform>
        <id>P09603-1</id>
        <name>1</name>
        <sequence type="displayed"/>
    </isoform>
    <isoform>
        <id>P09603-2</id>
        <name>2</name>
        <sequence type="described" ref="VSP_001188"/>
    </isoform>
    <isoform>
        <id>P09603-3</id>
        <name>3</name>
        <sequence type="described" ref="VSP_001187"/>
    </isoform>
</comment>
<comment type="PTM">
    <text evidence="18">N-glycosylated.</text>
</comment>
<comment type="PTM">
    <molecule>Isoform 1</molecule>
    <text evidence="18">N-glycosylated.</text>
</comment>
<comment type="PTM">
    <molecule>Isoform 3</molecule>
    <text evidence="18">N-glycosylated.</text>
</comment>
<comment type="PTM">
    <text evidence="5 12 13 18 22">O-glycosylated; contains chondroitin sulfate (PubMed:1531650, PubMed:8051056). O-glycosylated with core 1 or possibly core 8 glycans (PubMed:22171320, PubMed:23234360, PubMed:3264877).</text>
</comment>
<comment type="PTM">
    <molecule>Isoform 1</molecule>
    <text evidence="18">O-glycosylated.</text>
</comment>
<comment type="disease">
    <text>Aberrant expression of CSF1 or CSF1R can promote cancer cell proliferation, invasion and formation of metastases. Overexpression of CSF1 or CSF1R is observed in a significant percentage of breast, ovarian, prostate, and endometrial cancers.</text>
</comment>
<comment type="disease">
    <text>Aberrant expression of CSF1 or CSF1R may play a role in inflammatory diseases, such as rheumatoid arthritis, glomerulonephritis, atherosclerosis, and allograft rejection.</text>
</comment>